<comment type="function">
    <text evidence="1">Peptidoglycan polymerase that catalyzes glycan chain elongation from lipid-linked precursors.</text>
</comment>
<comment type="catalytic activity">
    <reaction evidence="1">
        <text>[GlcNAc-(1-&gt;4)-Mur2Ac(oyl-L-Ala-gamma-D-Glu-L-Lys-D-Ala-D-Ala)](n)-di-trans,octa-cis-undecaprenyl diphosphate + beta-D-GlcNAc-(1-&gt;4)-Mur2Ac(oyl-L-Ala-gamma-D-Glu-L-Lys-D-Ala-D-Ala)-di-trans,octa-cis-undecaprenyl diphosphate = [GlcNAc-(1-&gt;4)-Mur2Ac(oyl-L-Ala-gamma-D-Glu-L-Lys-D-Ala-D-Ala)](n+1)-di-trans,octa-cis-undecaprenyl diphosphate + di-trans,octa-cis-undecaprenyl diphosphate + H(+)</text>
        <dbReference type="Rhea" id="RHEA:23708"/>
        <dbReference type="Rhea" id="RHEA-COMP:9602"/>
        <dbReference type="Rhea" id="RHEA-COMP:9603"/>
        <dbReference type="ChEBI" id="CHEBI:15378"/>
        <dbReference type="ChEBI" id="CHEBI:58405"/>
        <dbReference type="ChEBI" id="CHEBI:60033"/>
        <dbReference type="ChEBI" id="CHEBI:78435"/>
        <dbReference type="EC" id="2.4.99.28"/>
    </reaction>
</comment>
<comment type="pathway">
    <text evidence="1">Cell wall biogenesis; peptidoglycan biosynthesis.</text>
</comment>
<comment type="subcellular location">
    <subcellularLocation>
        <location evidence="1">Cell inner membrane</location>
        <topology evidence="1">Single-pass membrane protein</topology>
    </subcellularLocation>
</comment>
<comment type="similarity">
    <text evidence="1">Belongs to the glycosyltransferase 51 family.</text>
</comment>
<evidence type="ECO:0000255" key="1">
    <source>
        <dbReference type="HAMAP-Rule" id="MF_00766"/>
    </source>
</evidence>
<accession>B7UJU8</accession>
<keyword id="KW-0997">Cell inner membrane</keyword>
<keyword id="KW-1003">Cell membrane</keyword>
<keyword id="KW-0133">Cell shape</keyword>
<keyword id="KW-0961">Cell wall biogenesis/degradation</keyword>
<keyword id="KW-0328">Glycosyltransferase</keyword>
<keyword id="KW-0472">Membrane</keyword>
<keyword id="KW-0573">Peptidoglycan synthesis</keyword>
<keyword id="KW-1185">Reference proteome</keyword>
<keyword id="KW-0808">Transferase</keyword>
<keyword id="KW-0812">Transmembrane</keyword>
<keyword id="KW-1133">Transmembrane helix</keyword>
<proteinExistence type="inferred from homology"/>
<feature type="chain" id="PRO_1000148433" description="Biosynthetic peptidoglycan transglycosylase">
    <location>
        <begin position="1"/>
        <end position="242"/>
    </location>
</feature>
<feature type="transmembrane region" description="Helical" evidence="1">
    <location>
        <begin position="19"/>
        <end position="39"/>
    </location>
</feature>
<dbReference type="EC" id="2.4.99.28" evidence="1"/>
<dbReference type="EMBL" id="FM180568">
    <property type="protein sequence ID" value="CAS11035.1"/>
    <property type="molecule type" value="Genomic_DNA"/>
</dbReference>
<dbReference type="RefSeq" id="WP_000047070.1">
    <property type="nucleotide sequence ID" value="NC_011601.1"/>
</dbReference>
<dbReference type="SMR" id="B7UJU8"/>
<dbReference type="CAZy" id="GT51">
    <property type="family name" value="Glycosyltransferase Family 51"/>
</dbReference>
<dbReference type="KEGG" id="ecg:E2348C_3487"/>
<dbReference type="HOGENOM" id="CLU_006354_1_1_6"/>
<dbReference type="UniPathway" id="UPA00219"/>
<dbReference type="Proteomes" id="UP000008205">
    <property type="component" value="Chromosome"/>
</dbReference>
<dbReference type="GO" id="GO:0009274">
    <property type="term" value="C:peptidoglycan-based cell wall"/>
    <property type="evidence" value="ECO:0007669"/>
    <property type="project" value="InterPro"/>
</dbReference>
<dbReference type="GO" id="GO:0005886">
    <property type="term" value="C:plasma membrane"/>
    <property type="evidence" value="ECO:0007669"/>
    <property type="project" value="UniProtKB-SubCell"/>
</dbReference>
<dbReference type="GO" id="GO:0016763">
    <property type="term" value="F:pentosyltransferase activity"/>
    <property type="evidence" value="ECO:0007669"/>
    <property type="project" value="InterPro"/>
</dbReference>
<dbReference type="GO" id="GO:0008955">
    <property type="term" value="F:peptidoglycan glycosyltransferase activity"/>
    <property type="evidence" value="ECO:0007669"/>
    <property type="project" value="UniProtKB-UniRule"/>
</dbReference>
<dbReference type="GO" id="GO:0071555">
    <property type="term" value="P:cell wall organization"/>
    <property type="evidence" value="ECO:0007669"/>
    <property type="project" value="UniProtKB-KW"/>
</dbReference>
<dbReference type="GO" id="GO:0009252">
    <property type="term" value="P:peptidoglycan biosynthetic process"/>
    <property type="evidence" value="ECO:0007669"/>
    <property type="project" value="UniProtKB-UniRule"/>
</dbReference>
<dbReference type="GO" id="GO:0008360">
    <property type="term" value="P:regulation of cell shape"/>
    <property type="evidence" value="ECO:0007669"/>
    <property type="project" value="UniProtKB-KW"/>
</dbReference>
<dbReference type="FunFam" id="1.10.3810.10:FF:000004">
    <property type="entry name" value="Biosynthetic peptidoglycan transglycosylase"/>
    <property type="match status" value="1"/>
</dbReference>
<dbReference type="Gene3D" id="1.10.3810.10">
    <property type="entry name" value="Biosynthetic peptidoglycan transglycosylase-like"/>
    <property type="match status" value="1"/>
</dbReference>
<dbReference type="HAMAP" id="MF_00766">
    <property type="entry name" value="PGT_MtgA"/>
    <property type="match status" value="1"/>
</dbReference>
<dbReference type="InterPro" id="IPR001264">
    <property type="entry name" value="Glyco_trans_51"/>
</dbReference>
<dbReference type="InterPro" id="IPR023346">
    <property type="entry name" value="Lysozyme-like_dom_sf"/>
</dbReference>
<dbReference type="InterPro" id="IPR036950">
    <property type="entry name" value="PBP_transglycosylase"/>
</dbReference>
<dbReference type="InterPro" id="IPR011812">
    <property type="entry name" value="Pep_trsgly"/>
</dbReference>
<dbReference type="NCBIfam" id="TIGR02070">
    <property type="entry name" value="mono_pep_trsgly"/>
    <property type="match status" value="1"/>
</dbReference>
<dbReference type="PANTHER" id="PTHR30400:SF0">
    <property type="entry name" value="BIOSYNTHETIC PEPTIDOGLYCAN TRANSGLYCOSYLASE"/>
    <property type="match status" value="1"/>
</dbReference>
<dbReference type="PANTHER" id="PTHR30400">
    <property type="entry name" value="MONOFUNCTIONAL BIOSYNTHETIC PEPTIDOGLYCAN TRANSGLYCOSYLASE"/>
    <property type="match status" value="1"/>
</dbReference>
<dbReference type="Pfam" id="PF00912">
    <property type="entry name" value="Transgly"/>
    <property type="match status" value="1"/>
</dbReference>
<dbReference type="SUPFAM" id="SSF53955">
    <property type="entry name" value="Lysozyme-like"/>
    <property type="match status" value="1"/>
</dbReference>
<protein>
    <recommendedName>
        <fullName evidence="1">Biosynthetic peptidoglycan transglycosylase</fullName>
        <ecNumber evidence="1">2.4.99.28</ecNumber>
    </recommendedName>
    <alternativeName>
        <fullName evidence="1">Glycan polymerase</fullName>
    </alternativeName>
    <alternativeName>
        <fullName evidence="1">Peptidoglycan glycosyltransferase MtgA</fullName>
        <shortName evidence="1">PGT</shortName>
    </alternativeName>
</protein>
<organism>
    <name type="scientific">Escherichia coli O127:H6 (strain E2348/69 / EPEC)</name>
    <dbReference type="NCBI Taxonomy" id="574521"/>
    <lineage>
        <taxon>Bacteria</taxon>
        <taxon>Pseudomonadati</taxon>
        <taxon>Pseudomonadota</taxon>
        <taxon>Gammaproteobacteria</taxon>
        <taxon>Enterobacterales</taxon>
        <taxon>Enterobacteriaceae</taxon>
        <taxon>Escherichia</taxon>
    </lineage>
</organism>
<gene>
    <name evidence="1" type="primary">mtgA</name>
    <name type="ordered locus">E2348C_3487</name>
</gene>
<reference key="1">
    <citation type="journal article" date="2009" name="J. Bacteriol.">
        <title>Complete genome sequence and comparative genome analysis of enteropathogenic Escherichia coli O127:H6 strain E2348/69.</title>
        <authorList>
            <person name="Iguchi A."/>
            <person name="Thomson N.R."/>
            <person name="Ogura Y."/>
            <person name="Saunders D."/>
            <person name="Ooka T."/>
            <person name="Henderson I.R."/>
            <person name="Harris D."/>
            <person name="Asadulghani M."/>
            <person name="Kurokawa K."/>
            <person name="Dean P."/>
            <person name="Kenny B."/>
            <person name="Quail M.A."/>
            <person name="Thurston S."/>
            <person name="Dougan G."/>
            <person name="Hayashi T."/>
            <person name="Parkhill J."/>
            <person name="Frankel G."/>
        </authorList>
    </citation>
    <scope>NUCLEOTIDE SEQUENCE [LARGE SCALE GENOMIC DNA]</scope>
    <source>
        <strain>E2348/69 / EPEC</strain>
    </source>
</reference>
<name>MTGA_ECO27</name>
<sequence length="242" mass="27339">MSKSRLTVFSFVRRFLLRLMVVLAIFWGGGIALFSVAPVPFSAVMVERQVSAWLHGNFRYVAHSDWVSMDQISPWMGLAVIAAEDQKFPEHWGFDVASIEQALAHNERNENRIRGASTISQQTAKNLFLWDGRSWVRKGLEAGLTLGIETVWSKKRILTVYLNIAEFGDGVFGVEAAAQRYFHKPASKLTRSQAALLAAVLPNPLRFKVSAPSGYVRSRQAWILRQMYQLGGEPFMQQHQLD</sequence>